<name>HIS83_RHILO</name>
<proteinExistence type="inferred from homology"/>
<feature type="chain" id="PRO_0000153434" description="Histidinol-phosphate aminotransferase 3">
    <location>
        <begin position="1"/>
        <end position="369"/>
    </location>
</feature>
<feature type="modified residue" description="N6-(pyridoxal phosphate)lysine" evidence="1">
    <location>
        <position position="220"/>
    </location>
</feature>
<gene>
    <name type="primary">hisC3</name>
    <name type="ordered locus">mlr5786</name>
</gene>
<keyword id="KW-0028">Amino-acid biosynthesis</keyword>
<keyword id="KW-0032">Aminotransferase</keyword>
<keyword id="KW-0368">Histidine biosynthesis</keyword>
<keyword id="KW-0663">Pyridoxal phosphate</keyword>
<keyword id="KW-0808">Transferase</keyword>
<organism>
    <name type="scientific">Mesorhizobium japonicum (strain LMG 29417 / CECT 9101 / MAFF 303099)</name>
    <name type="common">Mesorhizobium loti (strain MAFF 303099)</name>
    <dbReference type="NCBI Taxonomy" id="266835"/>
    <lineage>
        <taxon>Bacteria</taxon>
        <taxon>Pseudomonadati</taxon>
        <taxon>Pseudomonadota</taxon>
        <taxon>Alphaproteobacteria</taxon>
        <taxon>Hyphomicrobiales</taxon>
        <taxon>Phyllobacteriaceae</taxon>
        <taxon>Mesorhizobium</taxon>
    </lineage>
</organism>
<protein>
    <recommendedName>
        <fullName>Histidinol-phosphate aminotransferase 3</fullName>
        <ecNumber>2.6.1.9</ecNumber>
    </recommendedName>
    <alternativeName>
        <fullName>Imidazole acetol-phosphate transaminase 3</fullName>
    </alternativeName>
</protein>
<reference key="1">
    <citation type="journal article" date="2000" name="DNA Res.">
        <title>Complete genome structure of the nitrogen-fixing symbiotic bacterium Mesorhizobium loti.</title>
        <authorList>
            <person name="Kaneko T."/>
            <person name="Nakamura Y."/>
            <person name="Sato S."/>
            <person name="Asamizu E."/>
            <person name="Kato T."/>
            <person name="Sasamoto S."/>
            <person name="Watanabe A."/>
            <person name="Idesawa K."/>
            <person name="Ishikawa A."/>
            <person name="Kawashima K."/>
            <person name="Kimura T."/>
            <person name="Kishida Y."/>
            <person name="Kiyokawa C."/>
            <person name="Kohara M."/>
            <person name="Matsumoto M."/>
            <person name="Matsuno A."/>
            <person name="Mochizuki Y."/>
            <person name="Nakayama S."/>
            <person name="Nakazaki N."/>
            <person name="Shimpo S."/>
            <person name="Sugimoto M."/>
            <person name="Takeuchi C."/>
            <person name="Yamada M."/>
            <person name="Tabata S."/>
        </authorList>
    </citation>
    <scope>NUCLEOTIDE SEQUENCE [LARGE SCALE GENOMIC DNA]</scope>
    <source>
        <strain>LMG 29417 / CECT 9101 / MAFF 303099</strain>
    </source>
</reference>
<sequence length="369" mass="40711">MSDAKLQSVLSSLSQVARQLDALPSDTPAPDSSWVKLNTNENPFPLPEIIMQSAIAALERQYLYPEDDNISLREAAANAYSVSMDQVIAGNGSSELLGLVYRAFLTPGDSVAMMSPGFSFNRKLATLQGAQFVEIEFSKDHSLPMEQLLFGPAKDAKFILLANPNNPTGTFVPVADIERLVAKSDRLIVLDEAYVDFAPENGLRLINRYSNLLVLRTFSKSYAAAGVRVGFGFGHPEIIGRLRNIQNVFNMNVIGQAVGISVLAHRAAYADNHRHIRHERRRVTLALSQLGFSVIPSHANFLLARVPTAQDGSWWQSAFARQKILVAVFPDKGLENYIRVSIGTKEQMDAFLRAASRISRILNMSTPPR</sequence>
<accession>Q98B00</accession>
<evidence type="ECO:0000250" key="1"/>
<evidence type="ECO:0000305" key="2"/>
<comment type="catalytic activity">
    <reaction>
        <text>L-histidinol phosphate + 2-oxoglutarate = 3-(imidazol-4-yl)-2-oxopropyl phosphate + L-glutamate</text>
        <dbReference type="Rhea" id="RHEA:23744"/>
        <dbReference type="ChEBI" id="CHEBI:16810"/>
        <dbReference type="ChEBI" id="CHEBI:29985"/>
        <dbReference type="ChEBI" id="CHEBI:57766"/>
        <dbReference type="ChEBI" id="CHEBI:57980"/>
        <dbReference type="EC" id="2.6.1.9"/>
    </reaction>
</comment>
<comment type="cofactor">
    <cofactor evidence="1">
        <name>pyridoxal 5'-phosphate</name>
        <dbReference type="ChEBI" id="CHEBI:597326"/>
    </cofactor>
</comment>
<comment type="pathway">
    <text>Amino-acid biosynthesis; L-histidine biosynthesis; L-histidine from 5-phospho-alpha-D-ribose 1-diphosphate: step 7/9.</text>
</comment>
<comment type="subunit">
    <text evidence="1">Homodimer.</text>
</comment>
<comment type="similarity">
    <text evidence="2">Belongs to the class-II pyridoxal-phosphate-dependent aminotransferase family. Histidinol-phosphate aminotransferase subfamily.</text>
</comment>
<dbReference type="EC" id="2.6.1.9"/>
<dbReference type="EMBL" id="BA000012">
    <property type="protein sequence ID" value="BAB52172.1"/>
    <property type="molecule type" value="Genomic_DNA"/>
</dbReference>
<dbReference type="SMR" id="Q98B00"/>
<dbReference type="DNASU" id="1229045"/>
<dbReference type="KEGG" id="mlo:mlr5786"/>
<dbReference type="PATRIC" id="fig|266835.9.peg.4603"/>
<dbReference type="eggNOG" id="COG0079">
    <property type="taxonomic scope" value="Bacteria"/>
</dbReference>
<dbReference type="HOGENOM" id="CLU_017584_3_0_5"/>
<dbReference type="UniPathway" id="UPA00031">
    <property type="reaction ID" value="UER00012"/>
</dbReference>
<dbReference type="Proteomes" id="UP000000552">
    <property type="component" value="Chromosome"/>
</dbReference>
<dbReference type="GO" id="GO:0004400">
    <property type="term" value="F:histidinol-phosphate transaminase activity"/>
    <property type="evidence" value="ECO:0007669"/>
    <property type="project" value="UniProtKB-UniRule"/>
</dbReference>
<dbReference type="GO" id="GO:0030170">
    <property type="term" value="F:pyridoxal phosphate binding"/>
    <property type="evidence" value="ECO:0007669"/>
    <property type="project" value="InterPro"/>
</dbReference>
<dbReference type="GO" id="GO:0000105">
    <property type="term" value="P:L-histidine biosynthetic process"/>
    <property type="evidence" value="ECO:0007669"/>
    <property type="project" value="UniProtKB-UniRule"/>
</dbReference>
<dbReference type="CDD" id="cd00609">
    <property type="entry name" value="AAT_like"/>
    <property type="match status" value="1"/>
</dbReference>
<dbReference type="Gene3D" id="3.90.1150.10">
    <property type="entry name" value="Aspartate Aminotransferase, domain 1"/>
    <property type="match status" value="1"/>
</dbReference>
<dbReference type="Gene3D" id="3.40.640.10">
    <property type="entry name" value="Type I PLP-dependent aspartate aminotransferase-like (Major domain)"/>
    <property type="match status" value="1"/>
</dbReference>
<dbReference type="HAMAP" id="MF_01023">
    <property type="entry name" value="HisC_aminotrans_2"/>
    <property type="match status" value="1"/>
</dbReference>
<dbReference type="InterPro" id="IPR001917">
    <property type="entry name" value="Aminotrans_II_pyridoxalP_BS"/>
</dbReference>
<dbReference type="InterPro" id="IPR004839">
    <property type="entry name" value="Aminotransferase_I/II_large"/>
</dbReference>
<dbReference type="InterPro" id="IPR005861">
    <property type="entry name" value="HisP_aminotrans"/>
</dbReference>
<dbReference type="InterPro" id="IPR015424">
    <property type="entry name" value="PyrdxlP-dep_Trfase"/>
</dbReference>
<dbReference type="InterPro" id="IPR015421">
    <property type="entry name" value="PyrdxlP-dep_Trfase_major"/>
</dbReference>
<dbReference type="InterPro" id="IPR015422">
    <property type="entry name" value="PyrdxlP-dep_Trfase_small"/>
</dbReference>
<dbReference type="NCBIfam" id="TIGR01141">
    <property type="entry name" value="hisC"/>
    <property type="match status" value="1"/>
</dbReference>
<dbReference type="PANTHER" id="PTHR42885:SF2">
    <property type="entry name" value="HISTIDINOL-PHOSPHATE AMINOTRANSFERASE"/>
    <property type="match status" value="1"/>
</dbReference>
<dbReference type="PANTHER" id="PTHR42885">
    <property type="entry name" value="HISTIDINOL-PHOSPHATE AMINOTRANSFERASE-RELATED"/>
    <property type="match status" value="1"/>
</dbReference>
<dbReference type="Pfam" id="PF00155">
    <property type="entry name" value="Aminotran_1_2"/>
    <property type="match status" value="1"/>
</dbReference>
<dbReference type="SUPFAM" id="SSF53383">
    <property type="entry name" value="PLP-dependent transferases"/>
    <property type="match status" value="1"/>
</dbReference>
<dbReference type="PROSITE" id="PS00599">
    <property type="entry name" value="AA_TRANSFER_CLASS_2"/>
    <property type="match status" value="1"/>
</dbReference>